<evidence type="ECO:0000255" key="1">
    <source>
        <dbReference type="HAMAP-Rule" id="MF_00365"/>
    </source>
</evidence>
<organism>
    <name type="scientific">Rhizobium rhizogenes (strain K84 / ATCC BAA-868)</name>
    <name type="common">Agrobacterium radiobacter</name>
    <dbReference type="NCBI Taxonomy" id="311403"/>
    <lineage>
        <taxon>Bacteria</taxon>
        <taxon>Pseudomonadati</taxon>
        <taxon>Pseudomonadota</taxon>
        <taxon>Alphaproteobacteria</taxon>
        <taxon>Hyphomicrobiales</taxon>
        <taxon>Rhizobiaceae</taxon>
        <taxon>Rhizobium/Agrobacterium group</taxon>
        <taxon>Rhizobium</taxon>
    </lineage>
</organism>
<feature type="chain" id="PRO_1000193339" description="DNA replication and repair protein RecF">
    <location>
        <begin position="1"/>
        <end position="375"/>
    </location>
</feature>
<feature type="binding site" evidence="1">
    <location>
        <begin position="34"/>
        <end position="41"/>
    </location>
    <ligand>
        <name>ATP</name>
        <dbReference type="ChEBI" id="CHEBI:30616"/>
    </ligand>
</feature>
<keyword id="KW-0067">ATP-binding</keyword>
<keyword id="KW-0963">Cytoplasm</keyword>
<keyword id="KW-0227">DNA damage</keyword>
<keyword id="KW-0234">DNA repair</keyword>
<keyword id="KW-0235">DNA replication</keyword>
<keyword id="KW-0238">DNA-binding</keyword>
<keyword id="KW-0547">Nucleotide-binding</keyword>
<keyword id="KW-0742">SOS response</keyword>
<comment type="function">
    <text evidence="1">The RecF protein is involved in DNA metabolism; it is required for DNA replication and normal SOS inducibility. RecF binds preferentially to single-stranded, linear DNA. It also seems to bind ATP.</text>
</comment>
<comment type="subcellular location">
    <subcellularLocation>
        <location evidence="1">Cytoplasm</location>
    </subcellularLocation>
</comment>
<comment type="similarity">
    <text evidence="1">Belongs to the RecF family.</text>
</comment>
<sequence length="375" mass="41038">MPHKVFISRLKLTDFRNYAAAALTLDERHVVLTGDNGAGKTNLMEAVSLLSPGRGLRRAAYADVVRVAAPNGFSIFAELEGMEDTVEIGTGVDTSDETTARKLRINGTPAKTVDELTDHLRVLWLTPAMDGLFTGGSSERRRFLDRLVLSLDPAHGRRASDFERAMRSRNRLLSESRFDPSWLAGIEEQMASLGIAMALARQEMLGLLTRLIAETREATPFPSAALELSGFLDGQFDRPALDLEDAYAGMLREGRYRDAAAGRTLDGPHRTDLLVRHREKDMEAERCSTGEQKALLVGLILAHARLVGNLTGHAPVLLLDEIAAHLDEGRRAALFDLIDRLGGQAFMTGTDRAMFSALGERAQFFTVAHGGITKS</sequence>
<dbReference type="EMBL" id="CP000628">
    <property type="protein sequence ID" value="ACM24957.1"/>
    <property type="molecule type" value="Genomic_DNA"/>
</dbReference>
<dbReference type="RefSeq" id="WP_007690245.1">
    <property type="nucleotide sequence ID" value="NC_011985.1"/>
</dbReference>
<dbReference type="SMR" id="B9JGW1"/>
<dbReference type="STRING" id="311403.Arad_0209"/>
<dbReference type="GeneID" id="86850592"/>
<dbReference type="KEGG" id="ara:Arad_0209"/>
<dbReference type="eggNOG" id="COG1195">
    <property type="taxonomic scope" value="Bacteria"/>
</dbReference>
<dbReference type="HOGENOM" id="CLU_040267_2_0_5"/>
<dbReference type="Proteomes" id="UP000001600">
    <property type="component" value="Chromosome 1"/>
</dbReference>
<dbReference type="GO" id="GO:0005737">
    <property type="term" value="C:cytoplasm"/>
    <property type="evidence" value="ECO:0007669"/>
    <property type="project" value="UniProtKB-SubCell"/>
</dbReference>
<dbReference type="GO" id="GO:0005524">
    <property type="term" value="F:ATP binding"/>
    <property type="evidence" value="ECO:0007669"/>
    <property type="project" value="UniProtKB-UniRule"/>
</dbReference>
<dbReference type="GO" id="GO:0016887">
    <property type="term" value="F:ATP hydrolysis activity"/>
    <property type="evidence" value="ECO:0007669"/>
    <property type="project" value="InterPro"/>
</dbReference>
<dbReference type="GO" id="GO:0003697">
    <property type="term" value="F:single-stranded DNA binding"/>
    <property type="evidence" value="ECO:0007669"/>
    <property type="project" value="UniProtKB-UniRule"/>
</dbReference>
<dbReference type="GO" id="GO:0006260">
    <property type="term" value="P:DNA replication"/>
    <property type="evidence" value="ECO:0007669"/>
    <property type="project" value="UniProtKB-UniRule"/>
</dbReference>
<dbReference type="GO" id="GO:0000731">
    <property type="term" value="P:DNA synthesis involved in DNA repair"/>
    <property type="evidence" value="ECO:0007669"/>
    <property type="project" value="TreeGrafter"/>
</dbReference>
<dbReference type="GO" id="GO:0006302">
    <property type="term" value="P:double-strand break repair"/>
    <property type="evidence" value="ECO:0007669"/>
    <property type="project" value="TreeGrafter"/>
</dbReference>
<dbReference type="GO" id="GO:0009432">
    <property type="term" value="P:SOS response"/>
    <property type="evidence" value="ECO:0007669"/>
    <property type="project" value="UniProtKB-UniRule"/>
</dbReference>
<dbReference type="CDD" id="cd03242">
    <property type="entry name" value="ABC_RecF"/>
    <property type="match status" value="1"/>
</dbReference>
<dbReference type="Gene3D" id="3.40.50.300">
    <property type="entry name" value="P-loop containing nucleotide triphosphate hydrolases"/>
    <property type="match status" value="1"/>
</dbReference>
<dbReference type="Gene3D" id="1.20.1050.90">
    <property type="entry name" value="RecF/RecN/SMC, N-terminal domain"/>
    <property type="match status" value="1"/>
</dbReference>
<dbReference type="HAMAP" id="MF_00365">
    <property type="entry name" value="RecF"/>
    <property type="match status" value="1"/>
</dbReference>
<dbReference type="InterPro" id="IPR003593">
    <property type="entry name" value="AAA+_ATPase"/>
</dbReference>
<dbReference type="InterPro" id="IPR001238">
    <property type="entry name" value="DNA-binding_RecF"/>
</dbReference>
<dbReference type="InterPro" id="IPR018078">
    <property type="entry name" value="DNA-binding_RecF_CS"/>
</dbReference>
<dbReference type="InterPro" id="IPR027417">
    <property type="entry name" value="P-loop_NTPase"/>
</dbReference>
<dbReference type="InterPro" id="IPR003395">
    <property type="entry name" value="RecF/RecN/SMC_N"/>
</dbReference>
<dbReference type="InterPro" id="IPR042174">
    <property type="entry name" value="RecF_2"/>
</dbReference>
<dbReference type="NCBIfam" id="TIGR00611">
    <property type="entry name" value="recf"/>
    <property type="match status" value="1"/>
</dbReference>
<dbReference type="PANTHER" id="PTHR32182">
    <property type="entry name" value="DNA REPLICATION AND REPAIR PROTEIN RECF"/>
    <property type="match status" value="1"/>
</dbReference>
<dbReference type="PANTHER" id="PTHR32182:SF0">
    <property type="entry name" value="DNA REPLICATION AND REPAIR PROTEIN RECF"/>
    <property type="match status" value="1"/>
</dbReference>
<dbReference type="Pfam" id="PF02463">
    <property type="entry name" value="SMC_N"/>
    <property type="match status" value="1"/>
</dbReference>
<dbReference type="SMART" id="SM00382">
    <property type="entry name" value="AAA"/>
    <property type="match status" value="1"/>
</dbReference>
<dbReference type="SUPFAM" id="SSF52540">
    <property type="entry name" value="P-loop containing nucleoside triphosphate hydrolases"/>
    <property type="match status" value="1"/>
</dbReference>
<dbReference type="PROSITE" id="PS00617">
    <property type="entry name" value="RECF_1"/>
    <property type="match status" value="1"/>
</dbReference>
<dbReference type="PROSITE" id="PS00618">
    <property type="entry name" value="RECF_2"/>
    <property type="match status" value="1"/>
</dbReference>
<reference key="1">
    <citation type="journal article" date="2009" name="J. Bacteriol.">
        <title>Genome sequences of three Agrobacterium biovars help elucidate the evolution of multichromosome genomes in bacteria.</title>
        <authorList>
            <person name="Slater S.C."/>
            <person name="Goldman B.S."/>
            <person name="Goodner B."/>
            <person name="Setubal J.C."/>
            <person name="Farrand S.K."/>
            <person name="Nester E.W."/>
            <person name="Burr T.J."/>
            <person name="Banta L."/>
            <person name="Dickerman A.W."/>
            <person name="Paulsen I."/>
            <person name="Otten L."/>
            <person name="Suen G."/>
            <person name="Welch R."/>
            <person name="Almeida N.F."/>
            <person name="Arnold F."/>
            <person name="Burton O.T."/>
            <person name="Du Z."/>
            <person name="Ewing A."/>
            <person name="Godsy E."/>
            <person name="Heisel S."/>
            <person name="Houmiel K.L."/>
            <person name="Jhaveri J."/>
            <person name="Lu J."/>
            <person name="Miller N.M."/>
            <person name="Norton S."/>
            <person name="Chen Q."/>
            <person name="Phoolcharoen W."/>
            <person name="Ohlin V."/>
            <person name="Ondrusek D."/>
            <person name="Pride N."/>
            <person name="Stricklin S.L."/>
            <person name="Sun J."/>
            <person name="Wheeler C."/>
            <person name="Wilson L."/>
            <person name="Zhu H."/>
            <person name="Wood D.W."/>
        </authorList>
    </citation>
    <scope>NUCLEOTIDE SEQUENCE [LARGE SCALE GENOMIC DNA]</scope>
    <source>
        <strain>K84 / ATCC BAA-868</strain>
    </source>
</reference>
<name>RECF_RHIR8</name>
<accession>B9JGW1</accession>
<proteinExistence type="inferred from homology"/>
<protein>
    <recommendedName>
        <fullName evidence="1">DNA replication and repair protein RecF</fullName>
    </recommendedName>
</protein>
<gene>
    <name evidence="1" type="primary">recF</name>
    <name type="ordered locus">Arad_0209</name>
</gene>